<keyword id="KW-0067">ATP-binding</keyword>
<keyword id="KW-0190">Covalent protein-DNA linkage</keyword>
<keyword id="KW-0235">DNA replication</keyword>
<keyword id="KW-0238">DNA-binding</keyword>
<keyword id="KW-0255">Endonuclease</keyword>
<keyword id="KW-0347">Helicase</keyword>
<keyword id="KW-1048">Host nucleus</keyword>
<keyword id="KW-0378">Hydrolase</keyword>
<keyword id="KW-0460">Magnesium</keyword>
<keyword id="KW-0479">Metal-binding</keyword>
<keyword id="KW-0540">Nuclease</keyword>
<keyword id="KW-0547">Nucleotide-binding</keyword>
<keyword id="KW-1185">Reference proteome</keyword>
<keyword id="KW-0804">Transcription</keyword>
<keyword id="KW-0805">Transcription regulation</keyword>
<keyword id="KW-1194">Viral DNA replication</keyword>
<keyword id="KW-0231">Viral genome packaging</keyword>
<keyword id="KW-1188">Viral release from host cell</keyword>
<evidence type="ECO:0000250" key="1">
    <source>
        <dbReference type="UniProtKB" id="D0EZM8"/>
    </source>
</evidence>
<evidence type="ECO:0000250" key="2">
    <source>
        <dbReference type="UniProtKB" id="P03134"/>
    </source>
</evidence>
<evidence type="ECO:0000250" key="3">
    <source>
        <dbReference type="UniProtKB" id="Q9PZT1"/>
    </source>
</evidence>
<evidence type="ECO:0000255" key="4">
    <source>
        <dbReference type="PROSITE-ProRule" id="PRU00551"/>
    </source>
</evidence>
<evidence type="ECO:0000255" key="5">
    <source>
        <dbReference type="PROSITE-ProRule" id="PRU01366"/>
    </source>
</evidence>
<evidence type="ECO:0000256" key="6">
    <source>
        <dbReference type="SAM" id="MobiDB-lite"/>
    </source>
</evidence>
<evidence type="ECO:0000305" key="7"/>
<feature type="chain" id="PRO_0000222477" description="Initiator protein NS1">
    <location>
        <begin position="1"/>
        <end position="805"/>
    </location>
</feature>
<feature type="domain" description="PV NS1-Nuc" evidence="5">
    <location>
        <begin position="151"/>
        <end position="425"/>
    </location>
</feature>
<feature type="domain" description="SF3 helicase" evidence="4">
    <location>
        <begin position="553"/>
        <end position="708"/>
    </location>
</feature>
<feature type="region of interest" description="Disordered" evidence="6">
    <location>
        <begin position="231"/>
        <end position="276"/>
    </location>
</feature>
<feature type="region of interest" description="Disordered" evidence="6">
    <location>
        <begin position="776"/>
        <end position="805"/>
    </location>
</feature>
<feature type="short sequence motif" description="RCR-2" evidence="5">
    <location>
        <begin position="333"/>
        <end position="335"/>
    </location>
</feature>
<feature type="compositionally biased region" description="Low complexity" evidence="6">
    <location>
        <begin position="259"/>
        <end position="270"/>
    </location>
</feature>
<feature type="compositionally biased region" description="Basic and acidic residues" evidence="6">
    <location>
        <begin position="786"/>
        <end position="805"/>
    </location>
</feature>
<feature type="active site" description="For nuclease activity" evidence="5">
    <location>
        <position position="381"/>
    </location>
</feature>
<feature type="binding site" evidence="5">
    <location>
        <position position="329"/>
    </location>
    <ligand>
        <name>a divalent metal cation</name>
        <dbReference type="ChEBI" id="CHEBI:60240"/>
    </ligand>
</feature>
<feature type="binding site" evidence="5">
    <location>
        <position position="333"/>
    </location>
    <ligand>
        <name>a divalent metal cation</name>
        <dbReference type="ChEBI" id="CHEBI:60240"/>
    </ligand>
</feature>
<feature type="binding site" evidence="5">
    <location>
        <position position="335"/>
    </location>
    <ligand>
        <name>a divalent metal cation</name>
        <dbReference type="ChEBI" id="CHEBI:60240"/>
    </ligand>
</feature>
<feature type="binding site" evidence="4">
    <location>
        <begin position="583"/>
        <end position="590"/>
    </location>
    <ligand>
        <name>ATP</name>
        <dbReference type="ChEBI" id="CHEBI:30616"/>
    </ligand>
</feature>
<organismHost>
    <name type="scientific">Aedes albopictus</name>
    <name type="common">Asian tiger mosquito</name>
    <name type="synonym">Stegomyia albopicta</name>
    <dbReference type="NCBI Taxonomy" id="7160"/>
</organismHost>
<proteinExistence type="inferred from homology"/>
<gene>
    <name type="primary">NS1</name>
</gene>
<name>NS1_AADNV</name>
<organism>
    <name type="scientific">Aedes albopictus densovirus (isolate Boublik/1994)</name>
    <name type="common">AalDNV</name>
    <dbReference type="NCBI Taxonomy" id="648330"/>
    <lineage>
        <taxon>Viruses</taxon>
        <taxon>Monodnaviria</taxon>
        <taxon>Shotokuvirae</taxon>
        <taxon>Cossaviricota</taxon>
        <taxon>Quintoviricetes</taxon>
        <taxon>Piccovirales</taxon>
        <taxon>Parvoviridae</taxon>
        <taxon>Hamaparvovirinae</taxon>
        <taxon>Brevihamaparvovirus</taxon>
        <taxon>Brevihamaparvovirus dipteran1</taxon>
    </lineage>
</organism>
<sequence>STEYIRGINEGRVSSMESVCSEHSPCEHGNIECECIFCWEHDAQCKSRRRELDLGEPTGSERGMANNYEQSRNEDLYCTETVPSSAALQANTITERDIREDFTDQTVDNIYPQLHSGSRASEQLEFAFPTIGTRSWEILIRQSYEHLKPDYKEEDFQSHIRRVRRQLFPEKTMDNNGSQASTTQMLRDDIERCGIESIADSASEDNGDGVDGTCISTVDIQGNCIVNAHGNEQATGSKTRKIRATTTPESSESKKHKGSNNQQNIQEQSSTTAIADGHDIVDGELDGRSESNRETAYYTFVLHKNNCKEDWRYIATTRAKQAPSFITFDHGDHIHILFSSSNTGGNSTRVRTRITKFLSATSAGNAEATITFSKVKFLRNYILYCIRYGIETVNIYGNKIQQQLTEAMDTFKVLFENRDPNDVILDAGCKLYHEEKKEYQQKRCGQRKQQNLTDIILDKIKEKKITTAQQWENIIEPEFKIQLMKEFGLNVDSYVQRIVRIERTRIQQIIKSKTLTEIMVEILNEEYIKNFTPGEDNSKLQNIIQWIEYMFKENNINIIHFLAWNEIIKPKRYKKINGMVLEGITNAGKSLILDNLLAMVKPEEIPRERDNSGFHLDQLPGAGSVLFEEPMITPVNVGTWKLLLEGKTIKTDVKNKDKEPIERTPTWITTATPITNNVHMNETSQILQRIKLYIFKKSIQHREDKYTINAQIQNKLISRPPGLVEPIHMAIVFVKNFKEIYKLIEEEDNAHTVNEKAIRLSEEAKQEAEEWQTALQWNTMEEEQKENEKQTEDQDKESEKETATQ</sequence>
<accession>Q90185</accession>
<reference key="1">
    <citation type="journal article" date="1994" name="Virology">
        <title>Complete nucleotide sequence and genomic organization of the Aedes albopictus parvovirus (AaPV) pathogenic for Aedes aegypti larvae.</title>
        <authorList>
            <person name="Boublik Y."/>
            <person name="Jousset F.X."/>
            <person name="Bergoin M."/>
        </authorList>
    </citation>
    <scope>NUCLEOTIDE SEQUENCE [GENOMIC DNA]</scope>
</reference>
<dbReference type="EC" id="3.1.21.-" evidence="3"/>
<dbReference type="EC" id="3.6.4.12" evidence="3"/>
<dbReference type="EMBL" id="X74945">
    <property type="protein sequence ID" value="CAA52899.1"/>
    <property type="molecule type" value="Genomic_DNA"/>
</dbReference>
<dbReference type="RefSeq" id="NP_694827.1">
    <property type="nucleotide sequence ID" value="NC_004285.1"/>
</dbReference>
<dbReference type="GeneID" id="955416"/>
<dbReference type="KEGG" id="vg:955416"/>
<dbReference type="Proteomes" id="UP000008472">
    <property type="component" value="Segment"/>
</dbReference>
<dbReference type="GO" id="GO:0042025">
    <property type="term" value="C:host cell nucleus"/>
    <property type="evidence" value="ECO:0007669"/>
    <property type="project" value="UniProtKB-SubCell"/>
</dbReference>
<dbReference type="GO" id="GO:0005524">
    <property type="term" value="F:ATP binding"/>
    <property type="evidence" value="ECO:0007669"/>
    <property type="project" value="UniProtKB-KW"/>
</dbReference>
<dbReference type="GO" id="GO:0016887">
    <property type="term" value="F:ATP hydrolysis activity"/>
    <property type="evidence" value="ECO:0007669"/>
    <property type="project" value="RHEA"/>
</dbReference>
<dbReference type="GO" id="GO:0003677">
    <property type="term" value="F:DNA binding"/>
    <property type="evidence" value="ECO:0007669"/>
    <property type="project" value="UniProtKB-KW"/>
</dbReference>
<dbReference type="GO" id="GO:0004519">
    <property type="term" value="F:endonuclease activity"/>
    <property type="evidence" value="ECO:0007669"/>
    <property type="project" value="UniProtKB-KW"/>
</dbReference>
<dbReference type="GO" id="GO:0004386">
    <property type="term" value="F:helicase activity"/>
    <property type="evidence" value="ECO:0007669"/>
    <property type="project" value="UniProtKB-KW"/>
</dbReference>
<dbReference type="GO" id="GO:0046872">
    <property type="term" value="F:metal ion binding"/>
    <property type="evidence" value="ECO:0007669"/>
    <property type="project" value="UniProtKB-KW"/>
</dbReference>
<dbReference type="GO" id="GO:0006260">
    <property type="term" value="P:DNA replication"/>
    <property type="evidence" value="ECO:0007669"/>
    <property type="project" value="UniProtKB-KW"/>
</dbReference>
<dbReference type="GO" id="GO:0039693">
    <property type="term" value="P:viral DNA genome replication"/>
    <property type="evidence" value="ECO:0007669"/>
    <property type="project" value="UniProtKB-KW"/>
</dbReference>
<dbReference type="Gene3D" id="3.40.50.300">
    <property type="entry name" value="P-loop containing nucleotide triphosphate hydrolases"/>
    <property type="match status" value="1"/>
</dbReference>
<dbReference type="InterPro" id="IPR014015">
    <property type="entry name" value="Helicase_SF3_DNA-vir"/>
</dbReference>
<dbReference type="InterPro" id="IPR027417">
    <property type="entry name" value="P-loop_NTPase"/>
</dbReference>
<dbReference type="InterPro" id="IPR001257">
    <property type="entry name" value="Parvovirus_NS1_helicase"/>
</dbReference>
<dbReference type="InterPro" id="IPR049901">
    <property type="entry name" value="PV_NS1-NUC"/>
</dbReference>
<dbReference type="Pfam" id="PF01057">
    <property type="entry name" value="Parvo_NS1"/>
    <property type="match status" value="2"/>
</dbReference>
<dbReference type="SUPFAM" id="SSF52540">
    <property type="entry name" value="P-loop containing nucleoside triphosphate hydrolases"/>
    <property type="match status" value="1"/>
</dbReference>
<dbReference type="PROSITE" id="PS52022">
    <property type="entry name" value="PV_NS1_NUC"/>
    <property type="match status" value="1"/>
</dbReference>
<dbReference type="PROSITE" id="PS51206">
    <property type="entry name" value="SF3_HELICASE_1"/>
    <property type="match status" value="1"/>
</dbReference>
<comment type="function">
    <text evidence="2">Multifunctional protein which displays endonuclease and helicase activities required for initiating and directing viral DNA replication. Also plays a role in viral packaging and transactivation of several promoters. Binds site-specifically to 2-3 approximate tandem copies within the origins of replication (Ori), unwinds this hairpin region and nicks one DNA strand thereby initiating the rolling circle replication (RCR).</text>
</comment>
<comment type="catalytic activity">
    <reaction evidence="2">
        <text>ATP + H2O = ADP + phosphate + H(+)</text>
        <dbReference type="Rhea" id="RHEA:13065"/>
        <dbReference type="ChEBI" id="CHEBI:15377"/>
        <dbReference type="ChEBI" id="CHEBI:15378"/>
        <dbReference type="ChEBI" id="CHEBI:30616"/>
        <dbReference type="ChEBI" id="CHEBI:43474"/>
        <dbReference type="ChEBI" id="CHEBI:456216"/>
        <dbReference type="EC" id="3.6.4.12"/>
    </reaction>
</comment>
<comment type="cofactor">
    <cofactor evidence="2">
        <name>Mg(2+)</name>
        <dbReference type="ChEBI" id="CHEBI:18420"/>
    </cofactor>
    <text evidence="2">The endonuclease active site can probably bind other divalent cations.</text>
</comment>
<comment type="subunit">
    <text evidence="2">Homooligomer.</text>
</comment>
<comment type="subcellular location">
    <subcellularLocation>
        <location evidence="1">Host nucleus</location>
    </subcellularLocation>
</comment>
<comment type="domain">
    <text evidence="2 3">In the N-terminus, the endonuclease region is involved in binding to the origin of replication. In the middle, there are the ATPase and helicase activities (By similarity). The C-terminus probably contains a transactivation domain (By similarity).</text>
</comment>
<comment type="similarity">
    <text evidence="7">Belongs to the parvoviruses initiator protein NS1 family.</text>
</comment>
<protein>
    <recommendedName>
        <fullName evidence="2">Initiator protein NS1</fullName>
        <shortName>NS1</shortName>
        <ecNumber evidence="3">3.1.21.-</ecNumber>
        <ecNumber evidence="3">3.6.4.12</ecNumber>
    </recommendedName>
    <alternativeName>
        <fullName>Non-structural protein 1</fullName>
    </alternativeName>
    <alternativeName>
        <fullName>Non-structural protein NS1</fullName>
    </alternativeName>
</protein>